<protein>
    <recommendedName>
        <fullName evidence="1">Deoxyuridine 5'-triphosphate nucleotidohydrolase</fullName>
        <shortName evidence="1">dUTPase</shortName>
        <ecNumber evidence="1">3.6.1.23</ecNumber>
    </recommendedName>
    <alternativeName>
        <fullName evidence="1">dUTP pyrophosphatase</fullName>
    </alternativeName>
</protein>
<name>DUT_RHOPT</name>
<dbReference type="EC" id="3.6.1.23" evidence="1"/>
<dbReference type="EMBL" id="CP001096">
    <property type="protein sequence ID" value="ACE98645.1"/>
    <property type="molecule type" value="Genomic_DNA"/>
</dbReference>
<dbReference type="RefSeq" id="WP_011155651.1">
    <property type="nucleotide sequence ID" value="NC_011004.1"/>
</dbReference>
<dbReference type="SMR" id="B3Q616"/>
<dbReference type="GeneID" id="66891081"/>
<dbReference type="KEGG" id="rpt:Rpal_0083"/>
<dbReference type="HOGENOM" id="CLU_068508_1_2_5"/>
<dbReference type="OrthoDB" id="9809956at2"/>
<dbReference type="UniPathway" id="UPA00610">
    <property type="reaction ID" value="UER00666"/>
</dbReference>
<dbReference type="Proteomes" id="UP000001725">
    <property type="component" value="Chromosome"/>
</dbReference>
<dbReference type="GO" id="GO:0004170">
    <property type="term" value="F:dUTP diphosphatase activity"/>
    <property type="evidence" value="ECO:0007669"/>
    <property type="project" value="UniProtKB-UniRule"/>
</dbReference>
<dbReference type="GO" id="GO:0000287">
    <property type="term" value="F:magnesium ion binding"/>
    <property type="evidence" value="ECO:0007669"/>
    <property type="project" value="UniProtKB-UniRule"/>
</dbReference>
<dbReference type="GO" id="GO:0006226">
    <property type="term" value="P:dUMP biosynthetic process"/>
    <property type="evidence" value="ECO:0007669"/>
    <property type="project" value="UniProtKB-UniRule"/>
</dbReference>
<dbReference type="GO" id="GO:0046081">
    <property type="term" value="P:dUTP catabolic process"/>
    <property type="evidence" value="ECO:0007669"/>
    <property type="project" value="InterPro"/>
</dbReference>
<dbReference type="CDD" id="cd07557">
    <property type="entry name" value="trimeric_dUTPase"/>
    <property type="match status" value="1"/>
</dbReference>
<dbReference type="FunFam" id="2.70.40.10:FF:000002">
    <property type="entry name" value="dUTP diphosphatase"/>
    <property type="match status" value="1"/>
</dbReference>
<dbReference type="Gene3D" id="2.70.40.10">
    <property type="match status" value="1"/>
</dbReference>
<dbReference type="HAMAP" id="MF_00116">
    <property type="entry name" value="dUTPase_bact"/>
    <property type="match status" value="1"/>
</dbReference>
<dbReference type="InterPro" id="IPR008181">
    <property type="entry name" value="dUTPase"/>
</dbReference>
<dbReference type="InterPro" id="IPR029054">
    <property type="entry name" value="dUTPase-like"/>
</dbReference>
<dbReference type="InterPro" id="IPR036157">
    <property type="entry name" value="dUTPase-like_sf"/>
</dbReference>
<dbReference type="InterPro" id="IPR033704">
    <property type="entry name" value="dUTPase_trimeric"/>
</dbReference>
<dbReference type="NCBIfam" id="TIGR00576">
    <property type="entry name" value="dut"/>
    <property type="match status" value="1"/>
</dbReference>
<dbReference type="NCBIfam" id="NF001862">
    <property type="entry name" value="PRK00601.1"/>
    <property type="match status" value="1"/>
</dbReference>
<dbReference type="PANTHER" id="PTHR11241">
    <property type="entry name" value="DEOXYURIDINE 5'-TRIPHOSPHATE NUCLEOTIDOHYDROLASE"/>
    <property type="match status" value="1"/>
</dbReference>
<dbReference type="PANTHER" id="PTHR11241:SF0">
    <property type="entry name" value="DEOXYURIDINE 5'-TRIPHOSPHATE NUCLEOTIDOHYDROLASE"/>
    <property type="match status" value="1"/>
</dbReference>
<dbReference type="Pfam" id="PF00692">
    <property type="entry name" value="dUTPase"/>
    <property type="match status" value="1"/>
</dbReference>
<dbReference type="SUPFAM" id="SSF51283">
    <property type="entry name" value="dUTPase-like"/>
    <property type="match status" value="1"/>
</dbReference>
<gene>
    <name evidence="1" type="primary">dut</name>
    <name type="ordered locus">Rpal_0083</name>
</gene>
<organism>
    <name type="scientific">Rhodopseudomonas palustris (strain TIE-1)</name>
    <dbReference type="NCBI Taxonomy" id="395960"/>
    <lineage>
        <taxon>Bacteria</taxon>
        <taxon>Pseudomonadati</taxon>
        <taxon>Pseudomonadota</taxon>
        <taxon>Alphaproteobacteria</taxon>
        <taxon>Hyphomicrobiales</taxon>
        <taxon>Nitrobacteraceae</taxon>
        <taxon>Rhodopseudomonas</taxon>
    </lineage>
</organism>
<accession>B3Q616</accession>
<feature type="chain" id="PRO_1000094985" description="Deoxyuridine 5'-triphosphate nucleotidohydrolase">
    <location>
        <begin position="1"/>
        <end position="152"/>
    </location>
</feature>
<feature type="binding site" evidence="1">
    <location>
        <begin position="72"/>
        <end position="74"/>
    </location>
    <ligand>
        <name>substrate</name>
    </ligand>
</feature>
<feature type="binding site" evidence="1">
    <location>
        <position position="85"/>
    </location>
    <ligand>
        <name>substrate</name>
    </ligand>
</feature>
<feature type="binding site" evidence="1">
    <location>
        <begin position="89"/>
        <end position="91"/>
    </location>
    <ligand>
        <name>substrate</name>
    </ligand>
</feature>
<comment type="function">
    <text evidence="1">This enzyme is involved in nucleotide metabolism: it produces dUMP, the immediate precursor of thymidine nucleotides and it decreases the intracellular concentration of dUTP so that uracil cannot be incorporated into DNA.</text>
</comment>
<comment type="catalytic activity">
    <reaction evidence="1">
        <text>dUTP + H2O = dUMP + diphosphate + H(+)</text>
        <dbReference type="Rhea" id="RHEA:10248"/>
        <dbReference type="ChEBI" id="CHEBI:15377"/>
        <dbReference type="ChEBI" id="CHEBI:15378"/>
        <dbReference type="ChEBI" id="CHEBI:33019"/>
        <dbReference type="ChEBI" id="CHEBI:61555"/>
        <dbReference type="ChEBI" id="CHEBI:246422"/>
        <dbReference type="EC" id="3.6.1.23"/>
    </reaction>
</comment>
<comment type="cofactor">
    <cofactor evidence="1">
        <name>Mg(2+)</name>
        <dbReference type="ChEBI" id="CHEBI:18420"/>
    </cofactor>
</comment>
<comment type="pathway">
    <text evidence="1">Pyrimidine metabolism; dUMP biosynthesis; dUMP from dCTP (dUTP route): step 2/2.</text>
</comment>
<comment type="similarity">
    <text evidence="1">Belongs to the dUTPase family.</text>
</comment>
<evidence type="ECO:0000255" key="1">
    <source>
        <dbReference type="HAMAP-Rule" id="MF_00116"/>
    </source>
</evidence>
<reference key="1">
    <citation type="submission" date="2008-05" db="EMBL/GenBank/DDBJ databases">
        <title>Complete sequence of Rhodopseudomonas palustris TIE-1.</title>
        <authorList>
            <consortium name="US DOE Joint Genome Institute"/>
            <person name="Lucas S."/>
            <person name="Copeland A."/>
            <person name="Lapidus A."/>
            <person name="Glavina del Rio T."/>
            <person name="Dalin E."/>
            <person name="Tice H."/>
            <person name="Pitluck S."/>
            <person name="Chain P."/>
            <person name="Malfatti S."/>
            <person name="Shin M."/>
            <person name="Vergez L."/>
            <person name="Lang D."/>
            <person name="Schmutz J."/>
            <person name="Larimer F."/>
            <person name="Land M."/>
            <person name="Hauser L."/>
            <person name="Kyrpides N."/>
            <person name="Mikhailova N."/>
            <person name="Emerson D."/>
            <person name="Newman D.K."/>
            <person name="Roden E."/>
            <person name="Richardson P."/>
        </authorList>
    </citation>
    <scope>NUCLEOTIDE SEQUENCE [LARGE SCALE GENOMIC DNA]</scope>
    <source>
        <strain>TIE-1</strain>
    </source>
</reference>
<keyword id="KW-0378">Hydrolase</keyword>
<keyword id="KW-0460">Magnesium</keyword>
<keyword id="KW-0479">Metal-binding</keyword>
<keyword id="KW-0546">Nucleotide metabolism</keyword>
<proteinExistence type="inferred from homology"/>
<sequence>MTQKITVSIRHLPHGEGLPLPEYQTAHAAGLDLIAAVPQDAPLTLQPGRYVLVPTGLTIALPENYEAQVRPRSGLAAKHGVTVLNAPGTIDADYRGEIGVLLINHGTEPFAIRRGERIAQMVIAPVSRAQFVAVEALPESGRGAGGFGSTGR</sequence>